<accession>B5F2L9</accession>
<sequence>MTTKRKPYVRPMTSTWWKKLPFYRFYMLREGTAVPAVWFSIELIFGLFALKHGAESWMGFVGFLQNPVVVILNLITLAAALLHTKTWFELAPKAANIIVKDEKMGPEPIIKGLWVVTAVVTVVILYVALFW</sequence>
<evidence type="ECO:0000255" key="1">
    <source>
        <dbReference type="HAMAP-Rule" id="MF_00708"/>
    </source>
</evidence>
<protein>
    <recommendedName>
        <fullName evidence="1">Fumarate reductase subunit C</fullName>
    </recommendedName>
    <alternativeName>
        <fullName evidence="1">Fumarate reductase 15 kDa hydrophobic protein</fullName>
    </alternativeName>
    <alternativeName>
        <fullName evidence="1">Quinol-fumarate reductase subunit C</fullName>
        <shortName evidence="1">QFR subunit C</shortName>
    </alternativeName>
</protein>
<organism>
    <name type="scientific">Salmonella agona (strain SL483)</name>
    <dbReference type="NCBI Taxonomy" id="454166"/>
    <lineage>
        <taxon>Bacteria</taxon>
        <taxon>Pseudomonadati</taxon>
        <taxon>Pseudomonadota</taxon>
        <taxon>Gammaproteobacteria</taxon>
        <taxon>Enterobacterales</taxon>
        <taxon>Enterobacteriaceae</taxon>
        <taxon>Salmonella</taxon>
    </lineage>
</organism>
<reference key="1">
    <citation type="journal article" date="2011" name="J. Bacteriol.">
        <title>Comparative genomics of 28 Salmonella enterica isolates: evidence for CRISPR-mediated adaptive sublineage evolution.</title>
        <authorList>
            <person name="Fricke W.F."/>
            <person name="Mammel M.K."/>
            <person name="McDermott P.F."/>
            <person name="Tartera C."/>
            <person name="White D.G."/>
            <person name="Leclerc J.E."/>
            <person name="Ravel J."/>
            <person name="Cebula T.A."/>
        </authorList>
    </citation>
    <scope>NUCLEOTIDE SEQUENCE [LARGE SCALE GENOMIC DNA]</scope>
    <source>
        <strain>SL483</strain>
    </source>
</reference>
<gene>
    <name evidence="1" type="primary">frdC</name>
    <name type="ordered locus">SeAg_B4619</name>
</gene>
<feature type="chain" id="PRO_1000132380" description="Fumarate reductase subunit C">
    <location>
        <begin position="1"/>
        <end position="131"/>
    </location>
</feature>
<feature type="transmembrane region" description="Helical" evidence="1">
    <location>
        <begin position="30"/>
        <end position="50"/>
    </location>
</feature>
<feature type="transmembrane region" description="Helical" evidence="1">
    <location>
        <begin position="57"/>
        <end position="77"/>
    </location>
</feature>
<feature type="transmembrane region" description="Helical" evidence="1">
    <location>
        <begin position="109"/>
        <end position="129"/>
    </location>
</feature>
<name>FRDC_SALA4</name>
<proteinExistence type="inferred from homology"/>
<dbReference type="EMBL" id="CP001138">
    <property type="protein sequence ID" value="ACH48948.1"/>
    <property type="molecule type" value="Genomic_DNA"/>
</dbReference>
<dbReference type="RefSeq" id="WP_000208749.1">
    <property type="nucleotide sequence ID" value="NC_011149.1"/>
</dbReference>
<dbReference type="SMR" id="B5F2L9"/>
<dbReference type="KEGG" id="sea:SeAg_B4619"/>
<dbReference type="HOGENOM" id="CLU_156492_0_0_6"/>
<dbReference type="Proteomes" id="UP000008819">
    <property type="component" value="Chromosome"/>
</dbReference>
<dbReference type="GO" id="GO:0045283">
    <property type="term" value="C:fumarate reductase complex"/>
    <property type="evidence" value="ECO:0007669"/>
    <property type="project" value="UniProtKB-UniRule"/>
</dbReference>
<dbReference type="GO" id="GO:0005886">
    <property type="term" value="C:plasma membrane"/>
    <property type="evidence" value="ECO:0007669"/>
    <property type="project" value="UniProtKB-SubCell"/>
</dbReference>
<dbReference type="GO" id="GO:0000104">
    <property type="term" value="F:succinate dehydrogenase activity"/>
    <property type="evidence" value="ECO:0007669"/>
    <property type="project" value="UniProtKB-UniRule"/>
</dbReference>
<dbReference type="CDD" id="cd00546">
    <property type="entry name" value="QFR_TypeD_subunitC"/>
    <property type="match status" value="1"/>
</dbReference>
<dbReference type="Gene3D" id="1.20.1300.10">
    <property type="entry name" value="Fumarate reductase/succinate dehydrogenase, transmembrane subunit"/>
    <property type="match status" value="1"/>
</dbReference>
<dbReference type="HAMAP" id="MF_00708">
    <property type="entry name" value="Fumarate_red_C"/>
    <property type="match status" value="1"/>
</dbReference>
<dbReference type="InterPro" id="IPR003510">
    <property type="entry name" value="Fumarate_red_C"/>
</dbReference>
<dbReference type="InterPro" id="IPR034804">
    <property type="entry name" value="SQR/QFR_C/D"/>
</dbReference>
<dbReference type="NCBIfam" id="NF003445">
    <property type="entry name" value="PRK04987.1"/>
    <property type="match status" value="1"/>
</dbReference>
<dbReference type="Pfam" id="PF02300">
    <property type="entry name" value="Fumarate_red_C"/>
    <property type="match status" value="1"/>
</dbReference>
<dbReference type="PIRSF" id="PIRSF000180">
    <property type="entry name" value="FrdC"/>
    <property type="match status" value="1"/>
</dbReference>
<dbReference type="SUPFAM" id="SSF81343">
    <property type="entry name" value="Fumarate reductase respiratory complex transmembrane subunits"/>
    <property type="match status" value="1"/>
</dbReference>
<keyword id="KW-0997">Cell inner membrane</keyword>
<keyword id="KW-1003">Cell membrane</keyword>
<keyword id="KW-0472">Membrane</keyword>
<keyword id="KW-0812">Transmembrane</keyword>
<keyword id="KW-1133">Transmembrane helix</keyword>
<comment type="function">
    <text evidence="1">Two distinct, membrane-bound, FAD-containing enzymes are responsible for the catalysis of fumarate and succinate interconversion; fumarate reductase is used in anaerobic growth, and succinate dehydrogenase is used in aerobic growth. Anchors the catalytic components of the fumarate reductase complex to the cell inner membrane, binds quinones.</text>
</comment>
<comment type="subunit">
    <text evidence="1">Part of an enzyme complex containing four subunits: a flavoprotein (FrdA), an iron-sulfur protein (FrdB), and two hydrophobic anchor proteins (FrdC and FrdD).</text>
</comment>
<comment type="subcellular location">
    <subcellularLocation>
        <location evidence="1">Cell inner membrane</location>
        <topology evidence="1">Multi-pass membrane protein</topology>
    </subcellularLocation>
</comment>
<comment type="similarity">
    <text evidence="1">Belongs to the FrdC family.</text>
</comment>